<evidence type="ECO:0000255" key="1">
    <source>
        <dbReference type="HAMAP-Rule" id="MF_00185"/>
    </source>
</evidence>
<proteinExistence type="inferred from homology"/>
<gene>
    <name evidence="1" type="primary">miaA</name>
    <name type="ordered locus">Strop_1445</name>
</gene>
<sequence>MSAVDAAAGAADGAHLAAGTVVGVVGPTAAGKSALSVALAHALDGEVVNADSMQLYRGLDIGTAKLTTDERAGVPHHLLDIWPVTEPASVAEYQRLARAAVDDILARGRVPLLVGGSGLYLRAVLERFEFPGTDPVLRQRLEAELAQAGPAALHERLRAVDPDAAANILPGNGRRIVRALEVVELTGAPFTAALPDPSPYYRSVQVGVDLDTARLDERIALRVDRMWADGLVAETRLLADQGLAEGRTASRALGYQQVLRFLAGELTESEAYQETIRATRRFVRRQRSWFRRDPRITWLDSAGSGLVAEALRVVRPAAR</sequence>
<dbReference type="EC" id="2.5.1.75" evidence="1"/>
<dbReference type="EMBL" id="CP000667">
    <property type="protein sequence ID" value="ABP53911.1"/>
    <property type="molecule type" value="Genomic_DNA"/>
</dbReference>
<dbReference type="RefSeq" id="WP_011905343.1">
    <property type="nucleotide sequence ID" value="NC_009380.1"/>
</dbReference>
<dbReference type="SMR" id="A4X4W1"/>
<dbReference type="STRING" id="369723.Strop_1445"/>
<dbReference type="KEGG" id="stp:Strop_1445"/>
<dbReference type="PATRIC" id="fig|369723.5.peg.1474"/>
<dbReference type="eggNOG" id="COG0324">
    <property type="taxonomic scope" value="Bacteria"/>
</dbReference>
<dbReference type="HOGENOM" id="CLU_032616_0_1_11"/>
<dbReference type="Proteomes" id="UP000000235">
    <property type="component" value="Chromosome"/>
</dbReference>
<dbReference type="GO" id="GO:0005524">
    <property type="term" value="F:ATP binding"/>
    <property type="evidence" value="ECO:0007669"/>
    <property type="project" value="UniProtKB-UniRule"/>
</dbReference>
<dbReference type="GO" id="GO:0052381">
    <property type="term" value="F:tRNA dimethylallyltransferase activity"/>
    <property type="evidence" value="ECO:0007669"/>
    <property type="project" value="UniProtKB-UniRule"/>
</dbReference>
<dbReference type="GO" id="GO:0006400">
    <property type="term" value="P:tRNA modification"/>
    <property type="evidence" value="ECO:0007669"/>
    <property type="project" value="TreeGrafter"/>
</dbReference>
<dbReference type="FunFam" id="1.10.20.140:FF:000001">
    <property type="entry name" value="tRNA dimethylallyltransferase"/>
    <property type="match status" value="1"/>
</dbReference>
<dbReference type="Gene3D" id="1.10.20.140">
    <property type="match status" value="1"/>
</dbReference>
<dbReference type="Gene3D" id="3.40.50.300">
    <property type="entry name" value="P-loop containing nucleotide triphosphate hydrolases"/>
    <property type="match status" value="1"/>
</dbReference>
<dbReference type="HAMAP" id="MF_00185">
    <property type="entry name" value="IPP_trans"/>
    <property type="match status" value="1"/>
</dbReference>
<dbReference type="InterPro" id="IPR039657">
    <property type="entry name" value="Dimethylallyltransferase"/>
</dbReference>
<dbReference type="InterPro" id="IPR018022">
    <property type="entry name" value="IPT"/>
</dbReference>
<dbReference type="InterPro" id="IPR027417">
    <property type="entry name" value="P-loop_NTPase"/>
</dbReference>
<dbReference type="NCBIfam" id="TIGR00174">
    <property type="entry name" value="miaA"/>
    <property type="match status" value="1"/>
</dbReference>
<dbReference type="PANTHER" id="PTHR11088">
    <property type="entry name" value="TRNA DIMETHYLALLYLTRANSFERASE"/>
    <property type="match status" value="1"/>
</dbReference>
<dbReference type="PANTHER" id="PTHR11088:SF60">
    <property type="entry name" value="TRNA DIMETHYLALLYLTRANSFERASE"/>
    <property type="match status" value="1"/>
</dbReference>
<dbReference type="Pfam" id="PF01715">
    <property type="entry name" value="IPPT"/>
    <property type="match status" value="1"/>
</dbReference>
<dbReference type="SUPFAM" id="SSF52540">
    <property type="entry name" value="P-loop containing nucleoside triphosphate hydrolases"/>
    <property type="match status" value="1"/>
</dbReference>
<reference key="1">
    <citation type="journal article" date="2007" name="Proc. Natl. Acad. Sci. U.S.A.">
        <title>Genome sequencing reveals complex secondary metabolome in the marine actinomycete Salinispora tropica.</title>
        <authorList>
            <person name="Udwary D.W."/>
            <person name="Zeigler L."/>
            <person name="Asolkar R.N."/>
            <person name="Singan V."/>
            <person name="Lapidus A."/>
            <person name="Fenical W."/>
            <person name="Jensen P.R."/>
            <person name="Moore B.S."/>
        </authorList>
    </citation>
    <scope>NUCLEOTIDE SEQUENCE [LARGE SCALE GENOMIC DNA]</scope>
    <source>
        <strain>ATCC BAA-916 / DSM 44818 / JCM 13857 / NBRC 105044 / CNB-440</strain>
    </source>
</reference>
<organism>
    <name type="scientific">Salinispora tropica (strain ATCC BAA-916 / DSM 44818 / JCM 13857 / NBRC 105044 / CNB-440)</name>
    <dbReference type="NCBI Taxonomy" id="369723"/>
    <lineage>
        <taxon>Bacteria</taxon>
        <taxon>Bacillati</taxon>
        <taxon>Actinomycetota</taxon>
        <taxon>Actinomycetes</taxon>
        <taxon>Micromonosporales</taxon>
        <taxon>Micromonosporaceae</taxon>
        <taxon>Salinispora</taxon>
    </lineage>
</organism>
<name>MIAA_SALTO</name>
<protein>
    <recommendedName>
        <fullName evidence="1">tRNA dimethylallyltransferase</fullName>
        <ecNumber evidence="1">2.5.1.75</ecNumber>
    </recommendedName>
    <alternativeName>
        <fullName evidence="1">Dimethylallyl diphosphate:tRNA dimethylallyltransferase</fullName>
        <shortName evidence="1">DMAPP:tRNA dimethylallyltransferase</shortName>
        <shortName evidence="1">DMATase</shortName>
    </alternativeName>
    <alternativeName>
        <fullName evidence="1">Isopentenyl-diphosphate:tRNA isopentenyltransferase</fullName>
        <shortName evidence="1">IPP transferase</shortName>
        <shortName evidence="1">IPPT</shortName>
        <shortName evidence="1">IPTase</shortName>
    </alternativeName>
</protein>
<keyword id="KW-0067">ATP-binding</keyword>
<keyword id="KW-0460">Magnesium</keyword>
<keyword id="KW-0547">Nucleotide-binding</keyword>
<keyword id="KW-1185">Reference proteome</keyword>
<keyword id="KW-0808">Transferase</keyword>
<keyword id="KW-0819">tRNA processing</keyword>
<comment type="function">
    <text evidence="1">Catalyzes the transfer of a dimethylallyl group onto the adenine at position 37 in tRNAs that read codons beginning with uridine, leading to the formation of N6-(dimethylallyl)adenosine (i(6)A).</text>
</comment>
<comment type="catalytic activity">
    <reaction evidence="1">
        <text>adenosine(37) in tRNA + dimethylallyl diphosphate = N(6)-dimethylallyladenosine(37) in tRNA + diphosphate</text>
        <dbReference type="Rhea" id="RHEA:26482"/>
        <dbReference type="Rhea" id="RHEA-COMP:10162"/>
        <dbReference type="Rhea" id="RHEA-COMP:10375"/>
        <dbReference type="ChEBI" id="CHEBI:33019"/>
        <dbReference type="ChEBI" id="CHEBI:57623"/>
        <dbReference type="ChEBI" id="CHEBI:74411"/>
        <dbReference type="ChEBI" id="CHEBI:74415"/>
        <dbReference type="EC" id="2.5.1.75"/>
    </reaction>
</comment>
<comment type="cofactor">
    <cofactor evidence="1">
        <name>Mg(2+)</name>
        <dbReference type="ChEBI" id="CHEBI:18420"/>
    </cofactor>
</comment>
<comment type="subunit">
    <text evidence="1">Monomer.</text>
</comment>
<comment type="similarity">
    <text evidence="1">Belongs to the IPP transferase family.</text>
</comment>
<feature type="chain" id="PRO_0000377305" description="tRNA dimethylallyltransferase">
    <location>
        <begin position="1"/>
        <end position="319"/>
    </location>
</feature>
<feature type="region of interest" description="Interaction with substrate tRNA" evidence="1">
    <location>
        <begin position="51"/>
        <end position="54"/>
    </location>
</feature>
<feature type="binding site" evidence="1">
    <location>
        <begin position="26"/>
        <end position="33"/>
    </location>
    <ligand>
        <name>ATP</name>
        <dbReference type="ChEBI" id="CHEBI:30616"/>
    </ligand>
</feature>
<feature type="binding site" evidence="1">
    <location>
        <begin position="28"/>
        <end position="33"/>
    </location>
    <ligand>
        <name>substrate</name>
    </ligand>
</feature>
<feature type="site" description="Interaction with substrate tRNA" evidence="1">
    <location>
        <position position="117"/>
    </location>
</feature>
<feature type="site" description="Interaction with substrate tRNA" evidence="1">
    <location>
        <position position="138"/>
    </location>
</feature>
<accession>A4X4W1</accession>